<proteinExistence type="inferred from homology"/>
<feature type="chain" id="PRO_0000402649" description="Ureidoacrylate amidohydrolase RutB">
    <location>
        <begin position="1"/>
        <end position="238"/>
    </location>
</feature>
<feature type="active site" description="Proton acceptor" evidence="1">
    <location>
        <position position="35"/>
    </location>
</feature>
<feature type="active site" evidence="1">
    <location>
        <position position="144"/>
    </location>
</feature>
<feature type="active site" description="Nucleophile" evidence="1">
    <location>
        <position position="177"/>
    </location>
</feature>
<gene>
    <name evidence="1" type="primary">rutB</name>
    <name type="ordered locus">CCNA_02885</name>
</gene>
<accession>B8H1Q1</accession>
<comment type="function">
    <text evidence="1">Hydrolyzes ureidoacrylate to form aminoacrylate and carbamate. The carbamate hydrolyzes spontaneously, thereby releasing one of the nitrogen atoms of the pyrimidine ring as ammonia and one of its carbon atoms as CO2.</text>
</comment>
<comment type="catalytic activity">
    <reaction evidence="1">
        <text>(Z)-3-ureidoacrylate + H2O + H(+) = (Z)-3-aminoacrylate + NH4(+) + CO2</text>
        <dbReference type="Rhea" id="RHEA:42624"/>
        <dbReference type="ChEBI" id="CHEBI:15377"/>
        <dbReference type="ChEBI" id="CHEBI:15378"/>
        <dbReference type="ChEBI" id="CHEBI:16526"/>
        <dbReference type="ChEBI" id="CHEBI:28938"/>
        <dbReference type="ChEBI" id="CHEBI:59891"/>
        <dbReference type="ChEBI" id="CHEBI:59894"/>
        <dbReference type="EC" id="3.5.1.110"/>
    </reaction>
</comment>
<comment type="catalytic activity">
    <reaction evidence="1">
        <text>(Z)-3-ureidoacrylate + H2O = (Z)-3-aminoacrylate + carbamate + H(+)</text>
        <dbReference type="Rhea" id="RHEA:31603"/>
        <dbReference type="ChEBI" id="CHEBI:13941"/>
        <dbReference type="ChEBI" id="CHEBI:15377"/>
        <dbReference type="ChEBI" id="CHEBI:15378"/>
        <dbReference type="ChEBI" id="CHEBI:59891"/>
        <dbReference type="ChEBI" id="CHEBI:59894"/>
    </reaction>
</comment>
<comment type="catalytic activity">
    <reaction evidence="1">
        <text>(Z)-2-methylureidoacrylate + H2O + H(+) = (Z)-2-methylaminoacrylate + NH4(+) + CO2</text>
        <dbReference type="Rhea" id="RHEA:42620"/>
        <dbReference type="ChEBI" id="CHEBI:15377"/>
        <dbReference type="ChEBI" id="CHEBI:15378"/>
        <dbReference type="ChEBI" id="CHEBI:16526"/>
        <dbReference type="ChEBI" id="CHEBI:28938"/>
        <dbReference type="ChEBI" id="CHEBI:143783"/>
        <dbReference type="ChEBI" id="CHEBI:145735"/>
        <dbReference type="EC" id="3.5.1.110"/>
    </reaction>
</comment>
<comment type="similarity">
    <text evidence="1">Belongs to the isochorismatase family. RutB subfamily.</text>
</comment>
<dbReference type="EC" id="3.5.1.110" evidence="1"/>
<dbReference type="EMBL" id="CP001340">
    <property type="protein sequence ID" value="ACL96350.1"/>
    <property type="molecule type" value="Genomic_DNA"/>
</dbReference>
<dbReference type="RefSeq" id="WP_012640590.1">
    <property type="nucleotide sequence ID" value="NC_011916.1"/>
</dbReference>
<dbReference type="RefSeq" id="YP_002518258.1">
    <property type="nucleotide sequence ID" value="NC_011916.1"/>
</dbReference>
<dbReference type="SMR" id="B8H1Q1"/>
<dbReference type="GeneID" id="7331315"/>
<dbReference type="KEGG" id="ccs:CCNA_02885"/>
<dbReference type="PATRIC" id="fig|565050.3.peg.2815"/>
<dbReference type="HOGENOM" id="CLU_068979_8_0_5"/>
<dbReference type="OrthoDB" id="9807387at2"/>
<dbReference type="PhylomeDB" id="B8H1Q1"/>
<dbReference type="Proteomes" id="UP000001364">
    <property type="component" value="Chromosome"/>
</dbReference>
<dbReference type="GO" id="GO:0016811">
    <property type="term" value="F:hydrolase activity, acting on carbon-nitrogen (but not peptide) bonds, in linear amides"/>
    <property type="evidence" value="ECO:0007669"/>
    <property type="project" value="UniProtKB-UniRule"/>
</dbReference>
<dbReference type="GO" id="GO:0019740">
    <property type="term" value="P:nitrogen utilization"/>
    <property type="evidence" value="ECO:0007669"/>
    <property type="project" value="UniProtKB-UniRule"/>
</dbReference>
<dbReference type="GO" id="GO:0006212">
    <property type="term" value="P:uracil catabolic process"/>
    <property type="evidence" value="ECO:0007669"/>
    <property type="project" value="UniProtKB-UniRule"/>
</dbReference>
<dbReference type="CDD" id="cd00431">
    <property type="entry name" value="cysteine_hydrolases"/>
    <property type="match status" value="1"/>
</dbReference>
<dbReference type="Gene3D" id="3.40.50.850">
    <property type="entry name" value="Isochorismatase-like"/>
    <property type="match status" value="1"/>
</dbReference>
<dbReference type="HAMAP" id="MF_00830">
    <property type="entry name" value="RutB"/>
    <property type="match status" value="1"/>
</dbReference>
<dbReference type="InterPro" id="IPR000868">
    <property type="entry name" value="Isochorismatase-like_dom"/>
</dbReference>
<dbReference type="InterPro" id="IPR050272">
    <property type="entry name" value="Isochorismatase-like_hydrls"/>
</dbReference>
<dbReference type="InterPro" id="IPR036380">
    <property type="entry name" value="Isochorismatase-like_sf"/>
</dbReference>
<dbReference type="InterPro" id="IPR019916">
    <property type="entry name" value="RutB"/>
</dbReference>
<dbReference type="NCBIfam" id="TIGR03614">
    <property type="entry name" value="RutB"/>
    <property type="match status" value="1"/>
</dbReference>
<dbReference type="PANTHER" id="PTHR43540:SF6">
    <property type="entry name" value="ISOCHORISMATASE-LIKE DOMAIN-CONTAINING PROTEIN"/>
    <property type="match status" value="1"/>
</dbReference>
<dbReference type="PANTHER" id="PTHR43540">
    <property type="entry name" value="PEROXYUREIDOACRYLATE/UREIDOACRYLATE AMIDOHYDROLASE-RELATED"/>
    <property type="match status" value="1"/>
</dbReference>
<dbReference type="Pfam" id="PF00857">
    <property type="entry name" value="Isochorismatase"/>
    <property type="match status" value="1"/>
</dbReference>
<dbReference type="SUPFAM" id="SSF52499">
    <property type="entry name" value="Isochorismatase-like hydrolases"/>
    <property type="match status" value="1"/>
</dbReference>
<reference key="1">
    <citation type="journal article" date="2010" name="J. Bacteriol.">
        <title>The genetic basis of laboratory adaptation in Caulobacter crescentus.</title>
        <authorList>
            <person name="Marks M.E."/>
            <person name="Castro-Rojas C.M."/>
            <person name="Teiling C."/>
            <person name="Du L."/>
            <person name="Kapatral V."/>
            <person name="Walunas T.L."/>
            <person name="Crosson S."/>
        </authorList>
    </citation>
    <scope>NUCLEOTIDE SEQUENCE [LARGE SCALE GENOMIC DNA]</scope>
    <source>
        <strain>NA1000 / CB15N</strain>
    </source>
</reference>
<evidence type="ECO:0000255" key="1">
    <source>
        <dbReference type="HAMAP-Rule" id="MF_00830"/>
    </source>
</evidence>
<name>RUTB_CAUVN</name>
<sequence length="238" mass="25904">MSSPITPLSPGCVMLPARPEPLPVDPKTTAVIVIDMQNAYASPGGYLDLAGFDISGAAKVTHEIKGVLEVARSAGMTVIYFQNGWDDGYVEAGGPGSPNWWKSNALKTMRARPELQGKLLARGQWDYELVDDLTPQPGDIRLHKTRYSGFFNSQLDSVLRARGIRHLVFTGIATNVCVESTLRDGFMLEYFGTVLEDATHQAGPDFVQKAALFNIETFFGWVSTTADFKGTFGQLAPG</sequence>
<protein>
    <recommendedName>
        <fullName evidence="1">Ureidoacrylate amidohydrolase RutB</fullName>
        <ecNumber evidence="1">3.5.1.110</ecNumber>
    </recommendedName>
</protein>
<organism>
    <name type="scientific">Caulobacter vibrioides (strain NA1000 / CB15N)</name>
    <name type="common">Caulobacter crescentus</name>
    <dbReference type="NCBI Taxonomy" id="565050"/>
    <lineage>
        <taxon>Bacteria</taxon>
        <taxon>Pseudomonadati</taxon>
        <taxon>Pseudomonadota</taxon>
        <taxon>Alphaproteobacteria</taxon>
        <taxon>Caulobacterales</taxon>
        <taxon>Caulobacteraceae</taxon>
        <taxon>Caulobacter</taxon>
    </lineage>
</organism>
<keyword id="KW-0378">Hydrolase</keyword>
<keyword id="KW-1185">Reference proteome</keyword>